<gene>
    <name type="primary">INO80</name>
    <name type="ordered locus">KLLA0E08965g</name>
</gene>
<comment type="function">
    <text evidence="5">ATPase component of the INO80 complex which remodels chromatin by shifting nucleosomes and is involved in DNA repair.</text>
</comment>
<comment type="catalytic activity">
    <reaction evidence="1">
        <text>ATP + H2O = ADP + phosphate + H(+)</text>
        <dbReference type="Rhea" id="RHEA:13065"/>
        <dbReference type="ChEBI" id="CHEBI:15377"/>
        <dbReference type="ChEBI" id="CHEBI:15378"/>
        <dbReference type="ChEBI" id="CHEBI:30616"/>
        <dbReference type="ChEBI" id="CHEBI:43474"/>
        <dbReference type="ChEBI" id="CHEBI:456216"/>
    </reaction>
</comment>
<comment type="subunit">
    <text evidence="5">Component of the INO80 chromatin-remodeling complex.</text>
</comment>
<comment type="subcellular location">
    <subcellularLocation>
        <location evidence="5">Nucleus</location>
    </subcellularLocation>
</comment>
<comment type="domain">
    <text evidence="2">The DBINO region is involved in binding to DNA.</text>
</comment>
<comment type="similarity">
    <text evidence="7">Belongs to the SNF2/RAD54 helicase family.</text>
</comment>
<protein>
    <recommendedName>
        <fullName evidence="1">Chromatin-remodeling ATPase INO80</fullName>
        <ecNumber evidence="1">3.6.4.-</ecNumber>
    </recommendedName>
</protein>
<feature type="chain" id="PRO_0000074326" description="Chromatin-remodeling ATPase INO80">
    <location>
        <begin position="1"/>
        <end position="1489"/>
    </location>
</feature>
<feature type="domain" description="DBINO" evidence="5">
    <location>
        <begin position="518"/>
        <end position="643"/>
    </location>
</feature>
<feature type="domain" description="Helicase ATP-binding" evidence="3">
    <location>
        <begin position="758"/>
        <end position="930"/>
    </location>
</feature>
<feature type="domain" description="Helicase C-terminal" evidence="4">
    <location>
        <begin position="1323"/>
        <end position="1479"/>
    </location>
</feature>
<feature type="region of interest" description="Disordered" evidence="6">
    <location>
        <begin position="112"/>
        <end position="375"/>
    </location>
</feature>
<feature type="region of interest" description="Disordered" evidence="6">
    <location>
        <begin position="467"/>
        <end position="487"/>
    </location>
</feature>
<feature type="short sequence motif" description="DEAQ box">
    <location>
        <begin position="881"/>
        <end position="884"/>
    </location>
</feature>
<feature type="compositionally biased region" description="Polar residues" evidence="6">
    <location>
        <begin position="122"/>
        <end position="142"/>
    </location>
</feature>
<feature type="compositionally biased region" description="Polar residues" evidence="6">
    <location>
        <begin position="149"/>
        <end position="162"/>
    </location>
</feature>
<feature type="compositionally biased region" description="Basic residues" evidence="6">
    <location>
        <begin position="164"/>
        <end position="177"/>
    </location>
</feature>
<feature type="compositionally biased region" description="Polar residues" evidence="6">
    <location>
        <begin position="179"/>
        <end position="190"/>
    </location>
</feature>
<feature type="compositionally biased region" description="Low complexity" evidence="6">
    <location>
        <begin position="198"/>
        <end position="207"/>
    </location>
</feature>
<feature type="compositionally biased region" description="Basic and acidic residues" evidence="6">
    <location>
        <begin position="235"/>
        <end position="252"/>
    </location>
</feature>
<feature type="compositionally biased region" description="Polar residues" evidence="6">
    <location>
        <begin position="268"/>
        <end position="289"/>
    </location>
</feature>
<feature type="compositionally biased region" description="Acidic residues" evidence="6">
    <location>
        <begin position="305"/>
        <end position="319"/>
    </location>
</feature>
<feature type="compositionally biased region" description="Acidic residues" evidence="6">
    <location>
        <begin position="327"/>
        <end position="371"/>
    </location>
</feature>
<feature type="binding site" evidence="3">
    <location>
        <begin position="771"/>
        <end position="778"/>
    </location>
    <ligand>
        <name>ATP</name>
        <dbReference type="ChEBI" id="CHEBI:30616"/>
    </ligand>
</feature>
<evidence type="ECO:0000250" key="1">
    <source>
        <dbReference type="UniProtKB" id="P53115"/>
    </source>
</evidence>
<evidence type="ECO:0000250" key="2">
    <source>
        <dbReference type="UniProtKB" id="Q9ULG1"/>
    </source>
</evidence>
<evidence type="ECO:0000255" key="3">
    <source>
        <dbReference type="PROSITE-ProRule" id="PRU00541"/>
    </source>
</evidence>
<evidence type="ECO:0000255" key="4">
    <source>
        <dbReference type="PROSITE-ProRule" id="PRU00542"/>
    </source>
</evidence>
<evidence type="ECO:0000255" key="5">
    <source>
        <dbReference type="PROSITE-ProRule" id="PRU00746"/>
    </source>
</evidence>
<evidence type="ECO:0000256" key="6">
    <source>
        <dbReference type="SAM" id="MobiDB-lite"/>
    </source>
</evidence>
<evidence type="ECO:0000305" key="7"/>
<dbReference type="EC" id="3.6.4.-" evidence="1"/>
<dbReference type="EMBL" id="CR382125">
    <property type="protein sequence ID" value="CAG99442.1"/>
    <property type="molecule type" value="Genomic_DNA"/>
</dbReference>
<dbReference type="RefSeq" id="XP_454355.1">
    <property type="nucleotide sequence ID" value="XM_454355.1"/>
</dbReference>
<dbReference type="SMR" id="Q6CNY4"/>
<dbReference type="FunCoup" id="Q6CNY4">
    <property type="interactions" value="1193"/>
</dbReference>
<dbReference type="STRING" id="284590.Q6CNY4"/>
<dbReference type="PaxDb" id="284590-Q6CNY4"/>
<dbReference type="KEGG" id="kla:KLLA0_E08999g"/>
<dbReference type="eggNOG" id="KOG0388">
    <property type="taxonomic scope" value="Eukaryota"/>
</dbReference>
<dbReference type="HOGENOM" id="CLU_000315_26_2_1"/>
<dbReference type="InParanoid" id="Q6CNY4"/>
<dbReference type="OMA" id="FWKKNER"/>
<dbReference type="Proteomes" id="UP000000598">
    <property type="component" value="Chromosome E"/>
</dbReference>
<dbReference type="GO" id="GO:0031011">
    <property type="term" value="C:Ino80 complex"/>
    <property type="evidence" value="ECO:0007669"/>
    <property type="project" value="InterPro"/>
</dbReference>
<dbReference type="GO" id="GO:0005524">
    <property type="term" value="F:ATP binding"/>
    <property type="evidence" value="ECO:0007669"/>
    <property type="project" value="UniProtKB-KW"/>
</dbReference>
<dbReference type="GO" id="GO:0016887">
    <property type="term" value="F:ATP hydrolysis activity"/>
    <property type="evidence" value="ECO:0007669"/>
    <property type="project" value="TreeGrafter"/>
</dbReference>
<dbReference type="GO" id="GO:0140658">
    <property type="term" value="F:ATP-dependent chromatin remodeler activity"/>
    <property type="evidence" value="ECO:0007669"/>
    <property type="project" value="InterPro"/>
</dbReference>
<dbReference type="GO" id="GO:0003677">
    <property type="term" value="F:DNA binding"/>
    <property type="evidence" value="ECO:0007669"/>
    <property type="project" value="UniProtKB-KW"/>
</dbReference>
<dbReference type="GO" id="GO:0042393">
    <property type="term" value="F:histone binding"/>
    <property type="evidence" value="ECO:0007669"/>
    <property type="project" value="TreeGrafter"/>
</dbReference>
<dbReference type="GO" id="GO:0006281">
    <property type="term" value="P:DNA repair"/>
    <property type="evidence" value="ECO:0007669"/>
    <property type="project" value="UniProtKB-KW"/>
</dbReference>
<dbReference type="GO" id="GO:0006351">
    <property type="term" value="P:DNA-templated transcription"/>
    <property type="evidence" value="ECO:0007669"/>
    <property type="project" value="InterPro"/>
</dbReference>
<dbReference type="GO" id="GO:0060255">
    <property type="term" value="P:regulation of macromolecule metabolic process"/>
    <property type="evidence" value="ECO:0007669"/>
    <property type="project" value="UniProtKB-ARBA"/>
</dbReference>
<dbReference type="CDD" id="cd18002">
    <property type="entry name" value="DEXQc_INO80"/>
    <property type="match status" value="1"/>
</dbReference>
<dbReference type="CDD" id="cd18793">
    <property type="entry name" value="SF2_C_SNF"/>
    <property type="match status" value="1"/>
</dbReference>
<dbReference type="FunFam" id="3.40.50.10810:FF:000022">
    <property type="entry name" value="Blast:Putative DNA helicase Ino80"/>
    <property type="match status" value="1"/>
</dbReference>
<dbReference type="FunFam" id="3.40.50.300:FF:001269">
    <property type="entry name" value="SNF2 family helicase/ATPase"/>
    <property type="match status" value="1"/>
</dbReference>
<dbReference type="Gene3D" id="3.40.50.300">
    <property type="entry name" value="P-loop containing nucleotide triphosphate hydrolases"/>
    <property type="match status" value="2"/>
</dbReference>
<dbReference type="Gene3D" id="3.40.50.10810">
    <property type="entry name" value="Tandem AAA-ATPase domain"/>
    <property type="match status" value="1"/>
</dbReference>
<dbReference type="InterPro" id="IPR020838">
    <property type="entry name" value="DBINO"/>
</dbReference>
<dbReference type="InterPro" id="IPR031047">
    <property type="entry name" value="DEXQc_INO80"/>
</dbReference>
<dbReference type="InterPro" id="IPR014001">
    <property type="entry name" value="Helicase_ATP-bd"/>
</dbReference>
<dbReference type="InterPro" id="IPR001650">
    <property type="entry name" value="Helicase_C-like"/>
</dbReference>
<dbReference type="InterPro" id="IPR050520">
    <property type="entry name" value="INO80/SWR1_helicase"/>
</dbReference>
<dbReference type="InterPro" id="IPR027417">
    <property type="entry name" value="P-loop_NTPase"/>
</dbReference>
<dbReference type="InterPro" id="IPR038718">
    <property type="entry name" value="SNF2-like_sf"/>
</dbReference>
<dbReference type="InterPro" id="IPR049730">
    <property type="entry name" value="SNF2/RAD54-like_C"/>
</dbReference>
<dbReference type="InterPro" id="IPR000330">
    <property type="entry name" value="SNF2_N"/>
</dbReference>
<dbReference type="PANTHER" id="PTHR45685:SF2">
    <property type="entry name" value="CHROMATIN-REMODELING ATPASE INO80"/>
    <property type="match status" value="1"/>
</dbReference>
<dbReference type="PANTHER" id="PTHR45685">
    <property type="entry name" value="HELICASE SRCAP-RELATED"/>
    <property type="match status" value="1"/>
</dbReference>
<dbReference type="Pfam" id="PF13892">
    <property type="entry name" value="DBINO"/>
    <property type="match status" value="1"/>
</dbReference>
<dbReference type="Pfam" id="PF00271">
    <property type="entry name" value="Helicase_C"/>
    <property type="match status" value="1"/>
</dbReference>
<dbReference type="Pfam" id="PF00176">
    <property type="entry name" value="SNF2-rel_dom"/>
    <property type="match status" value="1"/>
</dbReference>
<dbReference type="SMART" id="SM00487">
    <property type="entry name" value="DEXDc"/>
    <property type="match status" value="1"/>
</dbReference>
<dbReference type="SMART" id="SM00490">
    <property type="entry name" value="HELICc"/>
    <property type="match status" value="1"/>
</dbReference>
<dbReference type="SUPFAM" id="SSF52540">
    <property type="entry name" value="P-loop containing nucleoside triphosphate hydrolases"/>
    <property type="match status" value="2"/>
</dbReference>
<dbReference type="PROSITE" id="PS51413">
    <property type="entry name" value="DBINO"/>
    <property type="match status" value="1"/>
</dbReference>
<dbReference type="PROSITE" id="PS51192">
    <property type="entry name" value="HELICASE_ATP_BIND_1"/>
    <property type="match status" value="1"/>
</dbReference>
<dbReference type="PROSITE" id="PS51194">
    <property type="entry name" value="HELICASE_CTER"/>
    <property type="match status" value="1"/>
</dbReference>
<proteinExistence type="inferred from homology"/>
<name>INO80_KLULA</name>
<sequence>MSLEKLLNREENDSSKRTDFMGRWYLKMSKICERDDREMDYQNWKFLSYQEFELINEWNQQGKELTKDNCERLLVNMDKTHKEWVEYQKFKEQKDAIIAELKESIQIIKQEPSIPSGADANSVVSSDTEQIQDSETTANSKKSPAINGIKTSGKSPTKSPATNGRRRGAGGNRRVKRPSNLSKTVRSRNATDGDENGNENIENGGTTPKRRSRPKKILVSNVSKDVDAEEEDDIHTEKDASGSAADLDKDIVDESINDSENAPRKRPVSSTSLLSRNKSNKPTKSSPLTPDSAREKENVNGVTEGNEDMDHDSVLDADDSAIGSDDNPNDEQEEADDENVDEEAEDENDEAEVEDDIDDLGAPEDDGDDDFAPSYSAISKVKVNKKVNIDSPMPAIQKELRKMAIKSSVAKAMKRKFTNCKVISYSPESQLEIKITLKQLHIRKYKRHLAEEERKRKAEEALIKAEEEAKKRKLAPPPPPPPQQVRRVEHDLPTYGMKITLKEARAIQRHYDQTYITIWKDMARRDSGRISRQLQQIQSIRGQNFRKTSSLCAKEARRWQMRNFRQVKDFQTRARRGIREMSSFWKKNEREEREMKKKAEKEAIEQAKKEEEQRENLRAAKKLNFLLTQTELYSHFIGSKIKTNELEGTMTDDSLTSMSNNKNKVVDLTKTAASKTNVESIDFATEDDEKLRLMAAQNASNALKETQDKARKFDEEDEEDGELNFQNPTSLGEITIDQPKMLACTLKEYQLKGLNWLANLYDQGINGILADEMGLGKTVQSISVLAHLADRYNIWGPFIVVTPASTLHNWVNEISRFVPQFKILPYWGNANDRKTLRKFWDRKHLRYGRDAPFHVMVTSYQMVVSDASYLQKMKWQYMILDEAQAIKSSQSSRWKTLLSFHCRNRLLLTGTPIQNNMQELWALLHFIMPSLFDSHDEFSDWFSKDIESHAESNTELNQEQLRRLHMVLKPFMLRRIKKNVQSELGDKIEIDVLCDLTFRQAKLYQVLKSQVSGGYDAIENAAGNDDVTSDQKLVNLVMEFRKVCNHPDLFERADVMSPFSFVSFGESASLSREGDFVEVNYSAKNLINYNLPRLIYDELVVPNYNNDVDVRAKLLYHTMNIFHPANSFQLCFILSKLTDTSPNKFATLLEQNVINRAIDLQNDGYFNTAKYSIAYDEGEKIFSSNLLINDKLKYLHLLKNSTSGSVLKNLLEIPSSVYENEYFNSISPAYHPAASAPPINIDVLASNNFVQKKQYEMFNPSISSALSSIPSSVQHKLIVEKGIPIEELPVTEMAPKAFNNSFTSYIEMPSMDRFITESAKLKKLDELLVKLKEEDHRVLIYFQMTKMMDLMEEYLTYRQYTHIRLDGSSKLDDRRDLVHDWQTKPDIFIFLLSTRAGGLGINLTAADTVIFYDSDWNPTIDSQAMDRAHRLGQTRQVTVYRLLIRGTIEERMRDRAKQKEHVQQVVMEGKAKENKQKIIEVEKEHSESA</sequence>
<accession>Q6CNY4</accession>
<reference key="1">
    <citation type="journal article" date="2004" name="Nature">
        <title>Genome evolution in yeasts.</title>
        <authorList>
            <person name="Dujon B."/>
            <person name="Sherman D."/>
            <person name="Fischer G."/>
            <person name="Durrens P."/>
            <person name="Casaregola S."/>
            <person name="Lafontaine I."/>
            <person name="de Montigny J."/>
            <person name="Marck C."/>
            <person name="Neuveglise C."/>
            <person name="Talla E."/>
            <person name="Goffard N."/>
            <person name="Frangeul L."/>
            <person name="Aigle M."/>
            <person name="Anthouard V."/>
            <person name="Babour A."/>
            <person name="Barbe V."/>
            <person name="Barnay S."/>
            <person name="Blanchin S."/>
            <person name="Beckerich J.-M."/>
            <person name="Beyne E."/>
            <person name="Bleykasten C."/>
            <person name="Boisrame A."/>
            <person name="Boyer J."/>
            <person name="Cattolico L."/>
            <person name="Confanioleri F."/>
            <person name="de Daruvar A."/>
            <person name="Despons L."/>
            <person name="Fabre E."/>
            <person name="Fairhead C."/>
            <person name="Ferry-Dumazet H."/>
            <person name="Groppi A."/>
            <person name="Hantraye F."/>
            <person name="Hennequin C."/>
            <person name="Jauniaux N."/>
            <person name="Joyet P."/>
            <person name="Kachouri R."/>
            <person name="Kerrest A."/>
            <person name="Koszul R."/>
            <person name="Lemaire M."/>
            <person name="Lesur I."/>
            <person name="Ma L."/>
            <person name="Muller H."/>
            <person name="Nicaud J.-M."/>
            <person name="Nikolski M."/>
            <person name="Oztas S."/>
            <person name="Ozier-Kalogeropoulos O."/>
            <person name="Pellenz S."/>
            <person name="Potier S."/>
            <person name="Richard G.-F."/>
            <person name="Straub M.-L."/>
            <person name="Suleau A."/>
            <person name="Swennen D."/>
            <person name="Tekaia F."/>
            <person name="Wesolowski-Louvel M."/>
            <person name="Westhof E."/>
            <person name="Wirth B."/>
            <person name="Zeniou-Meyer M."/>
            <person name="Zivanovic Y."/>
            <person name="Bolotin-Fukuhara M."/>
            <person name="Thierry A."/>
            <person name="Bouchier C."/>
            <person name="Caudron B."/>
            <person name="Scarpelli C."/>
            <person name="Gaillardin C."/>
            <person name="Weissenbach J."/>
            <person name="Wincker P."/>
            <person name="Souciet J.-L."/>
        </authorList>
    </citation>
    <scope>NUCLEOTIDE SEQUENCE [LARGE SCALE GENOMIC DNA]</scope>
    <source>
        <strain>ATCC 8585 / CBS 2359 / DSM 70799 / NBRC 1267 / NRRL Y-1140 / WM37</strain>
    </source>
</reference>
<keyword id="KW-0010">Activator</keyword>
<keyword id="KW-0067">ATP-binding</keyword>
<keyword id="KW-0227">DNA damage</keyword>
<keyword id="KW-0234">DNA repair</keyword>
<keyword id="KW-0238">DNA-binding</keyword>
<keyword id="KW-0378">Hydrolase</keyword>
<keyword id="KW-0547">Nucleotide-binding</keyword>
<keyword id="KW-0539">Nucleus</keyword>
<keyword id="KW-1185">Reference proteome</keyword>
<keyword id="KW-0804">Transcription</keyword>
<keyword id="KW-0805">Transcription regulation</keyword>
<organism>
    <name type="scientific">Kluyveromyces lactis (strain ATCC 8585 / CBS 2359 / DSM 70799 / NBRC 1267 / NRRL Y-1140 / WM37)</name>
    <name type="common">Yeast</name>
    <name type="synonym">Candida sphaerica</name>
    <dbReference type="NCBI Taxonomy" id="284590"/>
    <lineage>
        <taxon>Eukaryota</taxon>
        <taxon>Fungi</taxon>
        <taxon>Dikarya</taxon>
        <taxon>Ascomycota</taxon>
        <taxon>Saccharomycotina</taxon>
        <taxon>Saccharomycetes</taxon>
        <taxon>Saccharomycetales</taxon>
        <taxon>Saccharomycetaceae</taxon>
        <taxon>Kluyveromyces</taxon>
    </lineage>
</organism>